<comment type="function">
    <text evidence="1">Specifically methylates the guanine in position 1207 of 16S rRNA in the 30S particle.</text>
</comment>
<comment type="catalytic activity">
    <reaction evidence="1">
        <text>guanosine(1207) in 16S rRNA + S-adenosyl-L-methionine = N(2)-methylguanosine(1207) in 16S rRNA + S-adenosyl-L-homocysteine + H(+)</text>
        <dbReference type="Rhea" id="RHEA:42736"/>
        <dbReference type="Rhea" id="RHEA-COMP:10213"/>
        <dbReference type="Rhea" id="RHEA-COMP:10214"/>
        <dbReference type="ChEBI" id="CHEBI:15378"/>
        <dbReference type="ChEBI" id="CHEBI:57856"/>
        <dbReference type="ChEBI" id="CHEBI:59789"/>
        <dbReference type="ChEBI" id="CHEBI:74269"/>
        <dbReference type="ChEBI" id="CHEBI:74481"/>
        <dbReference type="EC" id="2.1.1.172"/>
    </reaction>
</comment>
<comment type="subunit">
    <text evidence="1">Monomer.</text>
</comment>
<comment type="subcellular location">
    <subcellularLocation>
        <location evidence="1">Cytoplasm</location>
    </subcellularLocation>
</comment>
<comment type="similarity">
    <text evidence="1">Belongs to the methyltransferase superfamily. RsmC family.</text>
</comment>
<accession>A6THY6</accession>
<organism>
    <name type="scientific">Klebsiella pneumoniae subsp. pneumoniae (strain ATCC 700721 / MGH 78578)</name>
    <dbReference type="NCBI Taxonomy" id="272620"/>
    <lineage>
        <taxon>Bacteria</taxon>
        <taxon>Pseudomonadati</taxon>
        <taxon>Pseudomonadota</taxon>
        <taxon>Gammaproteobacteria</taxon>
        <taxon>Enterobacterales</taxon>
        <taxon>Enterobacteriaceae</taxon>
        <taxon>Klebsiella/Raoultella group</taxon>
        <taxon>Klebsiella</taxon>
        <taxon>Klebsiella pneumoniae complex</taxon>
    </lineage>
</organism>
<sequence length="342" mass="37360">MSAFTPASEVLLRHSDDFESARVLFAGDLQDDLPARLDTAASRAHTQQFHHWQVLNRQMGDTVRFSLVAEAADVAECDTLIYYWPKNKPEAQFQLMNLLSLLPVGSDIFVVGENRSGVRSAEQMLAEYAPLNKVDSARRCGLYHGRLEKQPTFDADAFWGEYTLDNLTIKTLPGVFSRDGLDVGSQLLLSTLEPHTKGKVLDVGCGAGVLAAALASHSPKVRLTLCDVSAPAVEASRATLAANGLAGDVFASNVFSEVNGRFDMIISNPPFHDGLQTSLEAAQALIRGAVRHLNSGGELRIVANAFLPYPQVLDETFGFHEVIAQTGRFKVYRTIMTRQAKK</sequence>
<feature type="chain" id="PRO_0000369724" description="Ribosomal RNA small subunit methyltransferase C">
    <location>
        <begin position="1"/>
        <end position="342"/>
    </location>
</feature>
<keyword id="KW-0963">Cytoplasm</keyword>
<keyword id="KW-0489">Methyltransferase</keyword>
<keyword id="KW-0698">rRNA processing</keyword>
<keyword id="KW-0949">S-adenosyl-L-methionine</keyword>
<keyword id="KW-0808">Transferase</keyword>
<name>RSMC_KLEP7</name>
<reference key="1">
    <citation type="submission" date="2006-09" db="EMBL/GenBank/DDBJ databases">
        <authorList>
            <consortium name="The Klebsiella pneumonia Genome Sequencing Project"/>
            <person name="McClelland M."/>
            <person name="Sanderson E.K."/>
            <person name="Spieth J."/>
            <person name="Clifton W.S."/>
            <person name="Latreille P."/>
            <person name="Sabo A."/>
            <person name="Pepin K."/>
            <person name="Bhonagiri V."/>
            <person name="Porwollik S."/>
            <person name="Ali J."/>
            <person name="Wilson R.K."/>
        </authorList>
    </citation>
    <scope>NUCLEOTIDE SEQUENCE [LARGE SCALE GENOMIC DNA]</scope>
    <source>
        <strain>ATCC 700721 / MGH 78578</strain>
    </source>
</reference>
<dbReference type="EC" id="2.1.1.172" evidence="1"/>
<dbReference type="EMBL" id="CP000647">
    <property type="protein sequence ID" value="ABR80170.1"/>
    <property type="molecule type" value="Genomic_DNA"/>
</dbReference>
<dbReference type="RefSeq" id="WP_004177499.1">
    <property type="nucleotide sequence ID" value="NC_009648.1"/>
</dbReference>
<dbReference type="SMR" id="A6THY6"/>
<dbReference type="STRING" id="272620.KPN_04827"/>
<dbReference type="PaxDb" id="272620-KPN_04827"/>
<dbReference type="EnsemblBacteria" id="ABR80170">
    <property type="protein sequence ID" value="ABR80170"/>
    <property type="gene ID" value="KPN_04827"/>
</dbReference>
<dbReference type="KEGG" id="kpn:KPN_04827"/>
<dbReference type="HOGENOM" id="CLU_049581_0_1_6"/>
<dbReference type="Proteomes" id="UP000000265">
    <property type="component" value="Chromosome"/>
</dbReference>
<dbReference type="GO" id="GO:0005737">
    <property type="term" value="C:cytoplasm"/>
    <property type="evidence" value="ECO:0007669"/>
    <property type="project" value="UniProtKB-SubCell"/>
</dbReference>
<dbReference type="GO" id="GO:0052914">
    <property type="term" value="F:16S rRNA (guanine(1207)-N(2))-methyltransferase activity"/>
    <property type="evidence" value="ECO:0007669"/>
    <property type="project" value="UniProtKB-EC"/>
</dbReference>
<dbReference type="GO" id="GO:0003676">
    <property type="term" value="F:nucleic acid binding"/>
    <property type="evidence" value="ECO:0007669"/>
    <property type="project" value="InterPro"/>
</dbReference>
<dbReference type="CDD" id="cd02440">
    <property type="entry name" value="AdoMet_MTases"/>
    <property type="match status" value="1"/>
</dbReference>
<dbReference type="Gene3D" id="3.40.50.150">
    <property type="entry name" value="Vaccinia Virus protein VP39"/>
    <property type="match status" value="2"/>
</dbReference>
<dbReference type="HAMAP" id="MF_01862">
    <property type="entry name" value="16SrRNA_methyltr_C"/>
    <property type="match status" value="1"/>
</dbReference>
<dbReference type="InterPro" id="IPR002052">
    <property type="entry name" value="DNA_methylase_N6_adenine_CS"/>
</dbReference>
<dbReference type="InterPro" id="IPR013675">
    <property type="entry name" value="Mtase_sm_N"/>
</dbReference>
<dbReference type="InterPro" id="IPR023543">
    <property type="entry name" value="rRNA_ssu_MeTfrase_C"/>
</dbReference>
<dbReference type="InterPro" id="IPR046977">
    <property type="entry name" value="RsmC/RlmG"/>
</dbReference>
<dbReference type="InterPro" id="IPR029063">
    <property type="entry name" value="SAM-dependent_MTases_sf"/>
</dbReference>
<dbReference type="InterPro" id="IPR007848">
    <property type="entry name" value="Small_mtfrase_dom"/>
</dbReference>
<dbReference type="NCBIfam" id="NF007023">
    <property type="entry name" value="PRK09489.1"/>
    <property type="match status" value="1"/>
</dbReference>
<dbReference type="PANTHER" id="PTHR47816">
    <property type="entry name" value="RIBOSOMAL RNA SMALL SUBUNIT METHYLTRANSFERASE C"/>
    <property type="match status" value="1"/>
</dbReference>
<dbReference type="PANTHER" id="PTHR47816:SF4">
    <property type="entry name" value="RIBOSOMAL RNA SMALL SUBUNIT METHYLTRANSFERASE C"/>
    <property type="match status" value="1"/>
</dbReference>
<dbReference type="Pfam" id="PF05175">
    <property type="entry name" value="MTS"/>
    <property type="match status" value="1"/>
</dbReference>
<dbReference type="Pfam" id="PF08468">
    <property type="entry name" value="MTS_N"/>
    <property type="match status" value="1"/>
</dbReference>
<dbReference type="SUPFAM" id="SSF53335">
    <property type="entry name" value="S-adenosyl-L-methionine-dependent methyltransferases"/>
    <property type="match status" value="1"/>
</dbReference>
<protein>
    <recommendedName>
        <fullName evidence="1">Ribosomal RNA small subunit methyltransferase C</fullName>
        <ecNumber evidence="1">2.1.1.172</ecNumber>
    </recommendedName>
    <alternativeName>
        <fullName evidence="1">16S rRNA m2G1207 methyltransferase</fullName>
    </alternativeName>
    <alternativeName>
        <fullName evidence="1">rRNA (guanine-N(2)-)-methyltransferase RsmC</fullName>
    </alternativeName>
</protein>
<gene>
    <name evidence="1" type="primary">rsmC</name>
    <name type="ordered locus">KPN78578_47460</name>
    <name type="ORF">KPN_04827</name>
</gene>
<evidence type="ECO:0000255" key="1">
    <source>
        <dbReference type="HAMAP-Rule" id="MF_01862"/>
    </source>
</evidence>
<proteinExistence type="inferred from homology"/>